<gene>
    <name evidence="1" type="primary">rpmH</name>
    <name type="ordered locus">stu1808</name>
</gene>
<dbReference type="EMBL" id="CP000023">
    <property type="protein sequence ID" value="AAV61407.1"/>
    <property type="molecule type" value="Genomic_DNA"/>
</dbReference>
<dbReference type="RefSeq" id="WP_002953513.1">
    <property type="nucleotide sequence ID" value="NC_006448.1"/>
</dbReference>
<dbReference type="SMR" id="Q5M2K7"/>
<dbReference type="STRING" id="264199.stu1808"/>
<dbReference type="GeneID" id="66899545"/>
<dbReference type="KEGG" id="stl:stu1808"/>
<dbReference type="eggNOG" id="COG0230">
    <property type="taxonomic scope" value="Bacteria"/>
</dbReference>
<dbReference type="HOGENOM" id="CLU_129938_2_0_9"/>
<dbReference type="Proteomes" id="UP000001170">
    <property type="component" value="Chromosome"/>
</dbReference>
<dbReference type="GO" id="GO:1990904">
    <property type="term" value="C:ribonucleoprotein complex"/>
    <property type="evidence" value="ECO:0007669"/>
    <property type="project" value="UniProtKB-KW"/>
</dbReference>
<dbReference type="GO" id="GO:0005840">
    <property type="term" value="C:ribosome"/>
    <property type="evidence" value="ECO:0007669"/>
    <property type="project" value="UniProtKB-KW"/>
</dbReference>
<dbReference type="GO" id="GO:0003735">
    <property type="term" value="F:structural constituent of ribosome"/>
    <property type="evidence" value="ECO:0007669"/>
    <property type="project" value="InterPro"/>
</dbReference>
<dbReference type="GO" id="GO:0006412">
    <property type="term" value="P:translation"/>
    <property type="evidence" value="ECO:0007669"/>
    <property type="project" value="UniProtKB-UniRule"/>
</dbReference>
<dbReference type="FunFam" id="1.10.287.3980:FF:000001">
    <property type="entry name" value="Mitochondrial ribosomal protein L34"/>
    <property type="match status" value="1"/>
</dbReference>
<dbReference type="Gene3D" id="1.10.287.3980">
    <property type="match status" value="1"/>
</dbReference>
<dbReference type="HAMAP" id="MF_00391">
    <property type="entry name" value="Ribosomal_bL34"/>
    <property type="match status" value="1"/>
</dbReference>
<dbReference type="InterPro" id="IPR000271">
    <property type="entry name" value="Ribosomal_bL34"/>
</dbReference>
<dbReference type="InterPro" id="IPR020939">
    <property type="entry name" value="Ribosomal_bL34_CS"/>
</dbReference>
<dbReference type="NCBIfam" id="TIGR01030">
    <property type="entry name" value="rpmH_bact"/>
    <property type="match status" value="1"/>
</dbReference>
<dbReference type="PANTHER" id="PTHR14503:SF4">
    <property type="entry name" value="LARGE RIBOSOMAL SUBUNIT PROTEIN BL34M"/>
    <property type="match status" value="1"/>
</dbReference>
<dbReference type="PANTHER" id="PTHR14503">
    <property type="entry name" value="MITOCHONDRIAL RIBOSOMAL PROTEIN 34 FAMILY MEMBER"/>
    <property type="match status" value="1"/>
</dbReference>
<dbReference type="Pfam" id="PF00468">
    <property type="entry name" value="Ribosomal_L34"/>
    <property type="match status" value="1"/>
</dbReference>
<dbReference type="PROSITE" id="PS00784">
    <property type="entry name" value="RIBOSOMAL_L34"/>
    <property type="match status" value="1"/>
</dbReference>
<keyword id="KW-1185">Reference proteome</keyword>
<keyword id="KW-0687">Ribonucleoprotein</keyword>
<keyword id="KW-0689">Ribosomal protein</keyword>
<name>RL34_STRT2</name>
<reference key="1">
    <citation type="journal article" date="2004" name="Nat. Biotechnol.">
        <title>Complete sequence and comparative genome analysis of the dairy bacterium Streptococcus thermophilus.</title>
        <authorList>
            <person name="Bolotin A."/>
            <person name="Quinquis B."/>
            <person name="Renault P."/>
            <person name="Sorokin A."/>
            <person name="Ehrlich S.D."/>
            <person name="Kulakauskas S."/>
            <person name="Lapidus A."/>
            <person name="Goltsman E."/>
            <person name="Mazur M."/>
            <person name="Pusch G.D."/>
            <person name="Fonstein M."/>
            <person name="Overbeek R."/>
            <person name="Kyprides N."/>
            <person name="Purnelle B."/>
            <person name="Prozzi D."/>
            <person name="Ngui K."/>
            <person name="Masuy D."/>
            <person name="Hancy F."/>
            <person name="Burteau S."/>
            <person name="Boutry M."/>
            <person name="Delcour J."/>
            <person name="Goffeau A."/>
            <person name="Hols P."/>
        </authorList>
    </citation>
    <scope>NUCLEOTIDE SEQUENCE [LARGE SCALE GENOMIC DNA]</scope>
    <source>
        <strain>ATCC BAA-250 / LMG 18311</strain>
    </source>
</reference>
<feature type="chain" id="PRO_0000187481" description="Large ribosomal subunit protein bL34">
    <location>
        <begin position="1"/>
        <end position="44"/>
    </location>
</feature>
<feature type="region of interest" description="Disordered" evidence="2">
    <location>
        <begin position="1"/>
        <end position="44"/>
    </location>
</feature>
<accession>Q5M2K7</accession>
<evidence type="ECO:0000255" key="1">
    <source>
        <dbReference type="HAMAP-Rule" id="MF_00391"/>
    </source>
</evidence>
<evidence type="ECO:0000256" key="2">
    <source>
        <dbReference type="SAM" id="MobiDB-lite"/>
    </source>
</evidence>
<evidence type="ECO:0000305" key="3"/>
<sequence>MKRTYQPSKIRRQRKHGFRHRMSTKNGRRVLAARRRKGRKVLAA</sequence>
<comment type="similarity">
    <text evidence="1">Belongs to the bacterial ribosomal protein bL34 family.</text>
</comment>
<organism>
    <name type="scientific">Streptococcus thermophilus (strain ATCC BAA-250 / LMG 18311)</name>
    <dbReference type="NCBI Taxonomy" id="264199"/>
    <lineage>
        <taxon>Bacteria</taxon>
        <taxon>Bacillati</taxon>
        <taxon>Bacillota</taxon>
        <taxon>Bacilli</taxon>
        <taxon>Lactobacillales</taxon>
        <taxon>Streptococcaceae</taxon>
        <taxon>Streptococcus</taxon>
    </lineage>
</organism>
<protein>
    <recommendedName>
        <fullName evidence="1">Large ribosomal subunit protein bL34</fullName>
    </recommendedName>
    <alternativeName>
        <fullName evidence="3">50S ribosomal protein L34</fullName>
    </alternativeName>
</protein>
<proteinExistence type="inferred from homology"/>